<dbReference type="EC" id="3.1.26.5" evidence="1"/>
<dbReference type="EMBL" id="CP001068">
    <property type="protein sequence ID" value="ACD28875.1"/>
    <property type="molecule type" value="Genomic_DNA"/>
</dbReference>
<dbReference type="SMR" id="B2U822"/>
<dbReference type="STRING" id="402626.Rpic_3759"/>
<dbReference type="KEGG" id="rpi:Rpic_3759"/>
<dbReference type="eggNOG" id="COG0594">
    <property type="taxonomic scope" value="Bacteria"/>
</dbReference>
<dbReference type="HOGENOM" id="CLU_117179_11_1_4"/>
<dbReference type="GO" id="GO:0030677">
    <property type="term" value="C:ribonuclease P complex"/>
    <property type="evidence" value="ECO:0007669"/>
    <property type="project" value="TreeGrafter"/>
</dbReference>
<dbReference type="GO" id="GO:0042781">
    <property type="term" value="F:3'-tRNA processing endoribonuclease activity"/>
    <property type="evidence" value="ECO:0007669"/>
    <property type="project" value="TreeGrafter"/>
</dbReference>
<dbReference type="GO" id="GO:0004526">
    <property type="term" value="F:ribonuclease P activity"/>
    <property type="evidence" value="ECO:0007669"/>
    <property type="project" value="UniProtKB-UniRule"/>
</dbReference>
<dbReference type="GO" id="GO:0000049">
    <property type="term" value="F:tRNA binding"/>
    <property type="evidence" value="ECO:0007669"/>
    <property type="project" value="UniProtKB-UniRule"/>
</dbReference>
<dbReference type="GO" id="GO:0001682">
    <property type="term" value="P:tRNA 5'-leader removal"/>
    <property type="evidence" value="ECO:0007669"/>
    <property type="project" value="UniProtKB-UniRule"/>
</dbReference>
<dbReference type="Gene3D" id="3.30.230.10">
    <property type="match status" value="1"/>
</dbReference>
<dbReference type="HAMAP" id="MF_00227">
    <property type="entry name" value="RNase_P"/>
    <property type="match status" value="1"/>
</dbReference>
<dbReference type="InterPro" id="IPR020568">
    <property type="entry name" value="Ribosomal_Su5_D2-typ_SF"/>
</dbReference>
<dbReference type="InterPro" id="IPR014721">
    <property type="entry name" value="Ribsml_uS5_D2-typ_fold_subgr"/>
</dbReference>
<dbReference type="InterPro" id="IPR000100">
    <property type="entry name" value="RNase_P"/>
</dbReference>
<dbReference type="NCBIfam" id="TIGR00188">
    <property type="entry name" value="rnpA"/>
    <property type="match status" value="1"/>
</dbReference>
<dbReference type="PANTHER" id="PTHR33992">
    <property type="entry name" value="RIBONUCLEASE P PROTEIN COMPONENT"/>
    <property type="match status" value="1"/>
</dbReference>
<dbReference type="PANTHER" id="PTHR33992:SF1">
    <property type="entry name" value="RIBONUCLEASE P PROTEIN COMPONENT"/>
    <property type="match status" value="1"/>
</dbReference>
<dbReference type="Pfam" id="PF00825">
    <property type="entry name" value="Ribonuclease_P"/>
    <property type="match status" value="1"/>
</dbReference>
<dbReference type="SUPFAM" id="SSF54211">
    <property type="entry name" value="Ribosomal protein S5 domain 2-like"/>
    <property type="match status" value="1"/>
</dbReference>
<sequence>MGLHAYPKAARLTKTDEFSSVFALRPVRRSRHFVLYVRANGDRPARLGVVIGKKFAKRAVERNLIKRQCRELFRLRQPLLGGRDVLIRLQAKFPRQDVPTVAAFKRICREELAQLFEVATRPLSAPPAATPPQPTAGSTP</sequence>
<proteinExistence type="inferred from homology"/>
<name>RNPA_RALPJ</name>
<comment type="function">
    <text evidence="1">RNaseP catalyzes the removal of the 5'-leader sequence from pre-tRNA to produce the mature 5'-terminus. It can also cleave other RNA substrates such as 4.5S RNA. The protein component plays an auxiliary but essential role in vivo by binding to the 5'-leader sequence and broadening the substrate specificity of the ribozyme.</text>
</comment>
<comment type="catalytic activity">
    <reaction evidence="1">
        <text>Endonucleolytic cleavage of RNA, removing 5'-extranucleotides from tRNA precursor.</text>
        <dbReference type="EC" id="3.1.26.5"/>
    </reaction>
</comment>
<comment type="subunit">
    <text evidence="1">Consists of a catalytic RNA component (M1 or rnpB) and a protein subunit.</text>
</comment>
<comment type="similarity">
    <text evidence="1">Belongs to the RnpA family.</text>
</comment>
<organism>
    <name type="scientific">Ralstonia pickettii (strain 12J)</name>
    <dbReference type="NCBI Taxonomy" id="402626"/>
    <lineage>
        <taxon>Bacteria</taxon>
        <taxon>Pseudomonadati</taxon>
        <taxon>Pseudomonadota</taxon>
        <taxon>Betaproteobacteria</taxon>
        <taxon>Burkholderiales</taxon>
        <taxon>Burkholderiaceae</taxon>
        <taxon>Ralstonia</taxon>
    </lineage>
</organism>
<reference key="1">
    <citation type="submission" date="2008-05" db="EMBL/GenBank/DDBJ databases">
        <title>Complete sequence of chromosome 1 of Ralstonia pickettii 12J.</title>
        <authorList>
            <person name="Lucas S."/>
            <person name="Copeland A."/>
            <person name="Lapidus A."/>
            <person name="Glavina del Rio T."/>
            <person name="Dalin E."/>
            <person name="Tice H."/>
            <person name="Bruce D."/>
            <person name="Goodwin L."/>
            <person name="Pitluck S."/>
            <person name="Meincke L."/>
            <person name="Brettin T."/>
            <person name="Detter J.C."/>
            <person name="Han C."/>
            <person name="Kuske C.R."/>
            <person name="Schmutz J."/>
            <person name="Larimer F."/>
            <person name="Land M."/>
            <person name="Hauser L."/>
            <person name="Kyrpides N."/>
            <person name="Mikhailova N."/>
            <person name="Marsh T."/>
            <person name="Richardson P."/>
        </authorList>
    </citation>
    <scope>NUCLEOTIDE SEQUENCE [LARGE SCALE GENOMIC DNA]</scope>
    <source>
        <strain>12J</strain>
    </source>
</reference>
<evidence type="ECO:0000255" key="1">
    <source>
        <dbReference type="HAMAP-Rule" id="MF_00227"/>
    </source>
</evidence>
<gene>
    <name evidence="1" type="primary">rnpA</name>
    <name type="ordered locus">Rpic_3759</name>
</gene>
<protein>
    <recommendedName>
        <fullName evidence="1">Ribonuclease P protein component</fullName>
        <shortName evidence="1">RNase P protein</shortName>
        <shortName evidence="1">RNaseP protein</shortName>
        <ecNumber evidence="1">3.1.26.5</ecNumber>
    </recommendedName>
    <alternativeName>
        <fullName evidence="1">Protein C5</fullName>
    </alternativeName>
</protein>
<keyword id="KW-0255">Endonuclease</keyword>
<keyword id="KW-0378">Hydrolase</keyword>
<keyword id="KW-0540">Nuclease</keyword>
<keyword id="KW-0694">RNA-binding</keyword>
<keyword id="KW-0819">tRNA processing</keyword>
<accession>B2U822</accession>
<feature type="chain" id="PRO_1000100380" description="Ribonuclease P protein component">
    <location>
        <begin position="1"/>
        <end position="140"/>
    </location>
</feature>